<sequence>MCELYSKQDTLALRERHIGPSCKIFFAADPIKIMRAQGQYMFDEKGERYLDCINNVAHVGHCHPEVVKAAAKQMELLNTNSRFLHDNIIEFAKRLTATLPQELSVCYFTNSGSEANDLALRLARQFRGHQDVITLDHAYHGHLSSLIEISPYKFQKGKDVKRETVHVAPAPDTYRGKYREDHEDPSTAYADEVKKIIEEAHSSGRKIAAFIAESMQSCGGQIIPPAGYFQKVAEHIHKAGGVFIADEVQVGFGRVGRYFWSFQMYGEDFVPDIVTMGKPMGNGHPISCVVTTKEIAEAFSSSGMEYFNTYGGNPVSCAVGLAVLDVIEKENLQGNAVRVGTYLMELLSEQKAKHPLIGDIRGVGLFIGIDLVKDREKRTPATAEAQHIIYEMKGKGVLLSADGPHRNVLKIKPPMCFTEDDAKFLVDHLDGILTVLEEAMDSKSGTVFSENTAYRTKMPKEIQVELPNLSATEAREIPRGKRNGVCSDQQALLSKRLKT</sequence>
<protein>
    <recommendedName>
        <fullName>Ethanolamine-phosphate phospho-lyase</fullName>
        <ecNumber>4.2.3.2</ecNumber>
    </recommendedName>
    <alternativeName>
        <fullName>Alanine--glyoxylate aminotransferase 2-like 1</fullName>
    </alternativeName>
</protein>
<evidence type="ECO:0000250" key="1"/>
<evidence type="ECO:0000250" key="2">
    <source>
        <dbReference type="UniProtKB" id="Q8TBG4"/>
    </source>
</evidence>
<evidence type="ECO:0000305" key="3"/>
<gene>
    <name type="primary">Etnppl</name>
    <name type="synonym">Agxt2l1</name>
</gene>
<dbReference type="EC" id="4.2.3.2"/>
<dbReference type="EMBL" id="AK005060">
    <property type="protein sequence ID" value="BAB23784.1"/>
    <property type="molecule type" value="mRNA"/>
</dbReference>
<dbReference type="EMBL" id="AK049937">
    <property type="protein sequence ID" value="BAC33993.1"/>
    <property type="molecule type" value="mRNA"/>
</dbReference>
<dbReference type="EMBL" id="BC043680">
    <property type="protein sequence ID" value="AAH43680.2"/>
    <property type="molecule type" value="mRNA"/>
</dbReference>
<dbReference type="EMBL" id="BC058592">
    <property type="protein sequence ID" value="AAH58592.1"/>
    <property type="molecule type" value="mRNA"/>
</dbReference>
<dbReference type="CCDS" id="CCDS38638.1"/>
<dbReference type="RefSeq" id="NP_001157059.1">
    <property type="nucleotide sequence ID" value="NM_001163587.1"/>
</dbReference>
<dbReference type="RefSeq" id="NP_082183.2">
    <property type="nucleotide sequence ID" value="NM_027907.3"/>
</dbReference>
<dbReference type="SMR" id="Q8BWU8"/>
<dbReference type="FunCoup" id="Q8BWU8">
    <property type="interactions" value="99"/>
</dbReference>
<dbReference type="IntAct" id="Q8BWU8">
    <property type="interactions" value="1"/>
</dbReference>
<dbReference type="STRING" id="10090.ENSMUSP00000072121"/>
<dbReference type="iPTMnet" id="Q8BWU8"/>
<dbReference type="PhosphoSitePlus" id="Q8BWU8"/>
<dbReference type="jPOST" id="Q8BWU8"/>
<dbReference type="PaxDb" id="10090-ENSMUSP00000072121"/>
<dbReference type="ProteomicsDB" id="265128"/>
<dbReference type="Antibodypedia" id="45175">
    <property type="antibodies" value="58 antibodies from 22 providers"/>
</dbReference>
<dbReference type="DNASU" id="71760"/>
<dbReference type="Ensembl" id="ENSMUST00000072271.13">
    <property type="protein sequence ID" value="ENSMUSP00000072121.7"/>
    <property type="gene ID" value="ENSMUSG00000019232.15"/>
</dbReference>
<dbReference type="Ensembl" id="ENSMUST00000166187.8">
    <property type="protein sequence ID" value="ENSMUSP00000131294.2"/>
    <property type="gene ID" value="ENSMUSG00000019232.15"/>
</dbReference>
<dbReference type="GeneID" id="71760"/>
<dbReference type="KEGG" id="mmu:71760"/>
<dbReference type="UCSC" id="uc008rjb.2">
    <property type="organism name" value="mouse"/>
</dbReference>
<dbReference type="AGR" id="MGI:1919010"/>
<dbReference type="CTD" id="64850"/>
<dbReference type="MGI" id="MGI:1919010">
    <property type="gene designation" value="Etnppl"/>
</dbReference>
<dbReference type="VEuPathDB" id="HostDB:ENSMUSG00000019232"/>
<dbReference type="eggNOG" id="KOG1403">
    <property type="taxonomic scope" value="Eukaryota"/>
</dbReference>
<dbReference type="GeneTree" id="ENSGT00940000157910"/>
<dbReference type="HOGENOM" id="CLU_016922_8_0_1"/>
<dbReference type="InParanoid" id="Q8BWU8"/>
<dbReference type="OMA" id="GAIETMK"/>
<dbReference type="OrthoDB" id="10261433at2759"/>
<dbReference type="PhylomeDB" id="Q8BWU8"/>
<dbReference type="TreeFam" id="TF320468"/>
<dbReference type="Reactome" id="R-MMU-1483213">
    <property type="pathway name" value="Synthesis of PE"/>
</dbReference>
<dbReference type="BioGRID-ORCS" id="71760">
    <property type="hits" value="2 hits in 80 CRISPR screens"/>
</dbReference>
<dbReference type="PRO" id="PR:Q8BWU8"/>
<dbReference type="Proteomes" id="UP000000589">
    <property type="component" value="Chromosome 3"/>
</dbReference>
<dbReference type="RNAct" id="Q8BWU8">
    <property type="molecule type" value="protein"/>
</dbReference>
<dbReference type="Bgee" id="ENSMUSG00000019232">
    <property type="expression patterns" value="Expressed in lumbar subsegment of spinal cord and 100 other cell types or tissues"/>
</dbReference>
<dbReference type="ExpressionAtlas" id="Q8BWU8">
    <property type="expression patterns" value="baseline and differential"/>
</dbReference>
<dbReference type="GO" id="GO:0016020">
    <property type="term" value="C:membrane"/>
    <property type="evidence" value="ECO:0007669"/>
    <property type="project" value="GOC"/>
</dbReference>
<dbReference type="GO" id="GO:0005739">
    <property type="term" value="C:mitochondrion"/>
    <property type="evidence" value="ECO:0007669"/>
    <property type="project" value="UniProtKB-SubCell"/>
</dbReference>
<dbReference type="GO" id="GO:0050459">
    <property type="term" value="F:ethanolamine-phosphate phospho-lyase activity"/>
    <property type="evidence" value="ECO:0007669"/>
    <property type="project" value="UniProtKB-EC"/>
</dbReference>
<dbReference type="GO" id="GO:0030170">
    <property type="term" value="F:pyridoxal phosphate binding"/>
    <property type="evidence" value="ECO:0007669"/>
    <property type="project" value="InterPro"/>
</dbReference>
<dbReference type="GO" id="GO:0008483">
    <property type="term" value="F:transaminase activity"/>
    <property type="evidence" value="ECO:0007669"/>
    <property type="project" value="InterPro"/>
</dbReference>
<dbReference type="GO" id="GO:0071385">
    <property type="term" value="P:cellular response to glucocorticoid stimulus"/>
    <property type="evidence" value="ECO:0000315"/>
    <property type="project" value="MGI"/>
</dbReference>
<dbReference type="GO" id="GO:1905372">
    <property type="term" value="P:ceramide phosphoethanolamine catabolic process"/>
    <property type="evidence" value="ECO:0000315"/>
    <property type="project" value="MGI"/>
</dbReference>
<dbReference type="GO" id="GO:0055088">
    <property type="term" value="P:lipid homeostasis"/>
    <property type="evidence" value="ECO:0000315"/>
    <property type="project" value="MGI"/>
</dbReference>
<dbReference type="GO" id="GO:0006649">
    <property type="term" value="P:phospholipid transfer to membrane"/>
    <property type="evidence" value="ECO:0000315"/>
    <property type="project" value="MGI"/>
</dbReference>
<dbReference type="GO" id="GO:0032094">
    <property type="term" value="P:response to food"/>
    <property type="evidence" value="ECO:0000315"/>
    <property type="project" value="MGI"/>
</dbReference>
<dbReference type="CDD" id="cd00610">
    <property type="entry name" value="OAT_like"/>
    <property type="match status" value="1"/>
</dbReference>
<dbReference type="FunFam" id="3.40.640.10:FF:000058">
    <property type="entry name" value="ethanolamine-phosphate phospho-lyase isoform X1"/>
    <property type="match status" value="1"/>
</dbReference>
<dbReference type="Gene3D" id="3.90.1150.10">
    <property type="entry name" value="Aspartate Aminotransferase, domain 1"/>
    <property type="match status" value="1"/>
</dbReference>
<dbReference type="Gene3D" id="3.40.640.10">
    <property type="entry name" value="Type I PLP-dependent aspartate aminotransferase-like (Major domain)"/>
    <property type="match status" value="1"/>
</dbReference>
<dbReference type="InterPro" id="IPR005814">
    <property type="entry name" value="Aminotrans_3"/>
</dbReference>
<dbReference type="InterPro" id="IPR049704">
    <property type="entry name" value="Aminotrans_3_PPA_site"/>
</dbReference>
<dbReference type="InterPro" id="IPR015424">
    <property type="entry name" value="PyrdxlP-dep_Trfase"/>
</dbReference>
<dbReference type="InterPro" id="IPR015421">
    <property type="entry name" value="PyrdxlP-dep_Trfase_major"/>
</dbReference>
<dbReference type="InterPro" id="IPR015422">
    <property type="entry name" value="PyrdxlP-dep_Trfase_small"/>
</dbReference>
<dbReference type="PANTHER" id="PTHR45688">
    <property type="match status" value="1"/>
</dbReference>
<dbReference type="PANTHER" id="PTHR45688:SF1">
    <property type="entry name" value="ETHANOLAMINE-PHOSPHATE PHOSPHO-LYASE"/>
    <property type="match status" value="1"/>
</dbReference>
<dbReference type="Pfam" id="PF00202">
    <property type="entry name" value="Aminotran_3"/>
    <property type="match status" value="1"/>
</dbReference>
<dbReference type="PIRSF" id="PIRSF000521">
    <property type="entry name" value="Transaminase_4ab_Lys_Orn"/>
    <property type="match status" value="1"/>
</dbReference>
<dbReference type="SUPFAM" id="SSF53383">
    <property type="entry name" value="PLP-dependent transferases"/>
    <property type="match status" value="1"/>
</dbReference>
<dbReference type="PROSITE" id="PS00600">
    <property type="entry name" value="AA_TRANSFER_CLASS_3"/>
    <property type="match status" value="1"/>
</dbReference>
<name>AT2L1_MOUSE</name>
<proteinExistence type="evidence at transcript level"/>
<keyword id="KW-0456">Lyase</keyword>
<keyword id="KW-0496">Mitochondrion</keyword>
<keyword id="KW-0663">Pyridoxal phosphate</keyword>
<keyword id="KW-1185">Reference proteome</keyword>
<reference key="1">
    <citation type="journal article" date="2005" name="Science">
        <title>The transcriptional landscape of the mammalian genome.</title>
        <authorList>
            <person name="Carninci P."/>
            <person name="Kasukawa T."/>
            <person name="Katayama S."/>
            <person name="Gough J."/>
            <person name="Frith M.C."/>
            <person name="Maeda N."/>
            <person name="Oyama R."/>
            <person name="Ravasi T."/>
            <person name="Lenhard B."/>
            <person name="Wells C."/>
            <person name="Kodzius R."/>
            <person name="Shimokawa K."/>
            <person name="Bajic V.B."/>
            <person name="Brenner S.E."/>
            <person name="Batalov S."/>
            <person name="Forrest A.R."/>
            <person name="Zavolan M."/>
            <person name="Davis M.J."/>
            <person name="Wilming L.G."/>
            <person name="Aidinis V."/>
            <person name="Allen J.E."/>
            <person name="Ambesi-Impiombato A."/>
            <person name="Apweiler R."/>
            <person name="Aturaliya R.N."/>
            <person name="Bailey T.L."/>
            <person name="Bansal M."/>
            <person name="Baxter L."/>
            <person name="Beisel K.W."/>
            <person name="Bersano T."/>
            <person name="Bono H."/>
            <person name="Chalk A.M."/>
            <person name="Chiu K.P."/>
            <person name="Choudhary V."/>
            <person name="Christoffels A."/>
            <person name="Clutterbuck D.R."/>
            <person name="Crowe M.L."/>
            <person name="Dalla E."/>
            <person name="Dalrymple B.P."/>
            <person name="de Bono B."/>
            <person name="Della Gatta G."/>
            <person name="di Bernardo D."/>
            <person name="Down T."/>
            <person name="Engstrom P."/>
            <person name="Fagiolini M."/>
            <person name="Faulkner G."/>
            <person name="Fletcher C.F."/>
            <person name="Fukushima T."/>
            <person name="Furuno M."/>
            <person name="Futaki S."/>
            <person name="Gariboldi M."/>
            <person name="Georgii-Hemming P."/>
            <person name="Gingeras T.R."/>
            <person name="Gojobori T."/>
            <person name="Green R.E."/>
            <person name="Gustincich S."/>
            <person name="Harbers M."/>
            <person name="Hayashi Y."/>
            <person name="Hensch T.K."/>
            <person name="Hirokawa N."/>
            <person name="Hill D."/>
            <person name="Huminiecki L."/>
            <person name="Iacono M."/>
            <person name="Ikeo K."/>
            <person name="Iwama A."/>
            <person name="Ishikawa T."/>
            <person name="Jakt M."/>
            <person name="Kanapin A."/>
            <person name="Katoh M."/>
            <person name="Kawasawa Y."/>
            <person name="Kelso J."/>
            <person name="Kitamura H."/>
            <person name="Kitano H."/>
            <person name="Kollias G."/>
            <person name="Krishnan S.P."/>
            <person name="Kruger A."/>
            <person name="Kummerfeld S.K."/>
            <person name="Kurochkin I.V."/>
            <person name="Lareau L.F."/>
            <person name="Lazarevic D."/>
            <person name="Lipovich L."/>
            <person name="Liu J."/>
            <person name="Liuni S."/>
            <person name="McWilliam S."/>
            <person name="Madan Babu M."/>
            <person name="Madera M."/>
            <person name="Marchionni L."/>
            <person name="Matsuda H."/>
            <person name="Matsuzawa S."/>
            <person name="Miki H."/>
            <person name="Mignone F."/>
            <person name="Miyake S."/>
            <person name="Morris K."/>
            <person name="Mottagui-Tabar S."/>
            <person name="Mulder N."/>
            <person name="Nakano N."/>
            <person name="Nakauchi H."/>
            <person name="Ng P."/>
            <person name="Nilsson R."/>
            <person name="Nishiguchi S."/>
            <person name="Nishikawa S."/>
            <person name="Nori F."/>
            <person name="Ohara O."/>
            <person name="Okazaki Y."/>
            <person name="Orlando V."/>
            <person name="Pang K.C."/>
            <person name="Pavan W.J."/>
            <person name="Pavesi G."/>
            <person name="Pesole G."/>
            <person name="Petrovsky N."/>
            <person name="Piazza S."/>
            <person name="Reed J."/>
            <person name="Reid J.F."/>
            <person name="Ring B.Z."/>
            <person name="Ringwald M."/>
            <person name="Rost B."/>
            <person name="Ruan Y."/>
            <person name="Salzberg S.L."/>
            <person name="Sandelin A."/>
            <person name="Schneider C."/>
            <person name="Schoenbach C."/>
            <person name="Sekiguchi K."/>
            <person name="Semple C.A."/>
            <person name="Seno S."/>
            <person name="Sessa L."/>
            <person name="Sheng Y."/>
            <person name="Shibata Y."/>
            <person name="Shimada H."/>
            <person name="Shimada K."/>
            <person name="Silva D."/>
            <person name="Sinclair B."/>
            <person name="Sperling S."/>
            <person name="Stupka E."/>
            <person name="Sugiura K."/>
            <person name="Sultana R."/>
            <person name="Takenaka Y."/>
            <person name="Taki K."/>
            <person name="Tammoja K."/>
            <person name="Tan S.L."/>
            <person name="Tang S."/>
            <person name="Taylor M.S."/>
            <person name="Tegner J."/>
            <person name="Teichmann S.A."/>
            <person name="Ueda H.R."/>
            <person name="van Nimwegen E."/>
            <person name="Verardo R."/>
            <person name="Wei C.L."/>
            <person name="Yagi K."/>
            <person name="Yamanishi H."/>
            <person name="Zabarovsky E."/>
            <person name="Zhu S."/>
            <person name="Zimmer A."/>
            <person name="Hide W."/>
            <person name="Bult C."/>
            <person name="Grimmond S.M."/>
            <person name="Teasdale R.D."/>
            <person name="Liu E.T."/>
            <person name="Brusic V."/>
            <person name="Quackenbush J."/>
            <person name="Wahlestedt C."/>
            <person name="Mattick J.S."/>
            <person name="Hume D.A."/>
            <person name="Kai C."/>
            <person name="Sasaki D."/>
            <person name="Tomaru Y."/>
            <person name="Fukuda S."/>
            <person name="Kanamori-Katayama M."/>
            <person name="Suzuki M."/>
            <person name="Aoki J."/>
            <person name="Arakawa T."/>
            <person name="Iida J."/>
            <person name="Imamura K."/>
            <person name="Itoh M."/>
            <person name="Kato T."/>
            <person name="Kawaji H."/>
            <person name="Kawagashira N."/>
            <person name="Kawashima T."/>
            <person name="Kojima M."/>
            <person name="Kondo S."/>
            <person name="Konno H."/>
            <person name="Nakano K."/>
            <person name="Ninomiya N."/>
            <person name="Nishio T."/>
            <person name="Okada M."/>
            <person name="Plessy C."/>
            <person name="Shibata K."/>
            <person name="Shiraki T."/>
            <person name="Suzuki S."/>
            <person name="Tagami M."/>
            <person name="Waki K."/>
            <person name="Watahiki A."/>
            <person name="Okamura-Oho Y."/>
            <person name="Suzuki H."/>
            <person name="Kawai J."/>
            <person name="Hayashizaki Y."/>
        </authorList>
    </citation>
    <scope>NUCLEOTIDE SEQUENCE [LARGE SCALE MRNA]</scope>
    <source>
        <strain>C57BL/6J</strain>
        <tissue>Hippocampus</tissue>
        <tissue>Liver</tissue>
    </source>
</reference>
<reference key="2">
    <citation type="journal article" date="2004" name="Genome Res.">
        <title>The status, quality, and expansion of the NIH full-length cDNA project: the Mammalian Gene Collection (MGC).</title>
        <authorList>
            <consortium name="The MGC Project Team"/>
        </authorList>
    </citation>
    <scope>NUCLEOTIDE SEQUENCE [LARGE SCALE MRNA]</scope>
    <source>
        <strain>FVB/N</strain>
        <tissue>Eye</tissue>
        <tissue>Liver</tissue>
    </source>
</reference>
<accession>Q8BWU8</accession>
<accession>Q811K4</accession>
<accession>Q9DBB3</accession>
<comment type="function">
    <text evidence="1">Catalyzes the pyridoxal-phosphate-dependent breakdown of phosphoethanolamine, converting it to ammonia, inorganic phosphate and acetaldehyde.</text>
</comment>
<comment type="catalytic activity">
    <reaction>
        <text>phosphoethanolamine + H2O = acetaldehyde + NH4(+) + phosphate</text>
        <dbReference type="Rhea" id="RHEA:17889"/>
        <dbReference type="ChEBI" id="CHEBI:15343"/>
        <dbReference type="ChEBI" id="CHEBI:15377"/>
        <dbReference type="ChEBI" id="CHEBI:28938"/>
        <dbReference type="ChEBI" id="CHEBI:43474"/>
        <dbReference type="ChEBI" id="CHEBI:58190"/>
        <dbReference type="EC" id="4.2.3.2"/>
    </reaction>
</comment>
<comment type="cofactor">
    <cofactor evidence="1">
        <name>pyridoxal 5'-phosphate</name>
        <dbReference type="ChEBI" id="CHEBI:597326"/>
    </cofactor>
</comment>
<comment type="subunit">
    <text evidence="1">Homotetramer.</text>
</comment>
<comment type="subcellular location">
    <subcellularLocation>
        <location evidence="3">Mitochondrion</location>
    </subcellularLocation>
</comment>
<comment type="similarity">
    <text evidence="3">Belongs to the class-III pyridoxal-phosphate-dependent aminotransferase family.</text>
</comment>
<comment type="caution">
    <text evidence="2">Does not seem to possess aminotransferase activity.</text>
</comment>
<organism>
    <name type="scientific">Mus musculus</name>
    <name type="common">Mouse</name>
    <dbReference type="NCBI Taxonomy" id="10090"/>
    <lineage>
        <taxon>Eukaryota</taxon>
        <taxon>Metazoa</taxon>
        <taxon>Chordata</taxon>
        <taxon>Craniata</taxon>
        <taxon>Vertebrata</taxon>
        <taxon>Euteleostomi</taxon>
        <taxon>Mammalia</taxon>
        <taxon>Eutheria</taxon>
        <taxon>Euarchontoglires</taxon>
        <taxon>Glires</taxon>
        <taxon>Rodentia</taxon>
        <taxon>Myomorpha</taxon>
        <taxon>Muroidea</taxon>
        <taxon>Muridae</taxon>
        <taxon>Murinae</taxon>
        <taxon>Mus</taxon>
        <taxon>Mus</taxon>
    </lineage>
</organism>
<feature type="chain" id="PRO_0000287664" description="Ethanolamine-phosphate phospho-lyase">
    <location>
        <begin position="1"/>
        <end position="499"/>
    </location>
</feature>
<feature type="modified residue" description="N6-(pyridoxal phosphate)lysine" evidence="1">
    <location>
        <position position="278"/>
    </location>
</feature>
<feature type="sequence conflict" description="In Ref. 2; AAH43680." evidence="3" ref="2">
    <original>A</original>
    <variation>V</variation>
    <location>
        <position position="12"/>
    </location>
</feature>
<feature type="sequence conflict" description="In Ref. 1; BAB23784." evidence="3" ref="1">
    <original>N</original>
    <variation>D</variation>
    <location>
        <position position="282"/>
    </location>
</feature>